<comment type="function">
    <text evidence="2">Together with the chaperonin GroEL, plays an essential role in assisting protein folding. The GroEL-GroES system forms a nano-cage that allows encapsulation of the non-native substrate proteins and provides a physical environment optimized to promote and accelerate protein folding. GroES binds to the apical surface of the GroEL ring, thereby capping the opening of the GroEL channel.</text>
</comment>
<comment type="subunit">
    <text evidence="2">Heptamer of 7 subunits arranged in a ring. Interacts with the chaperonin GroEL.</text>
</comment>
<comment type="subcellular location">
    <subcellularLocation>
        <location evidence="2">Cytoplasm</location>
    </subcellularLocation>
</comment>
<comment type="similarity">
    <text evidence="2 3">Belongs to the GroES chaperonin family.</text>
</comment>
<feature type="initiator methionine" description="Removed" evidence="1">
    <location>
        <position position="1"/>
    </location>
</feature>
<feature type="chain" id="PRO_0000426966" description="Co-chaperonin GroES">
    <location>
        <begin position="2"/>
        <end position="100"/>
    </location>
</feature>
<protein>
    <recommendedName>
        <fullName evidence="2">Co-chaperonin GroES</fullName>
    </recommendedName>
    <alternativeName>
        <fullName>10 kDa antigen</fullName>
    </alternativeName>
    <alternativeName>
        <fullName evidence="2">10 kDa chaperonin</fullName>
    </alternativeName>
    <alternativeName>
        <fullName>BCG-A heat shock protein</fullName>
    </alternativeName>
    <alternativeName>
        <fullName evidence="2">Chaperonin-10</fullName>
        <shortName evidence="2">Cpn10</shortName>
    </alternativeName>
</protein>
<reference key="1">
    <citation type="journal article" date="2002" name="J. Bacteriol.">
        <title>Whole-genome comparison of Mycobacterium tuberculosis clinical and laboratory strains.</title>
        <authorList>
            <person name="Fleischmann R.D."/>
            <person name="Alland D."/>
            <person name="Eisen J.A."/>
            <person name="Carpenter L."/>
            <person name="White O."/>
            <person name="Peterson J.D."/>
            <person name="DeBoy R.T."/>
            <person name="Dodson R.J."/>
            <person name="Gwinn M.L."/>
            <person name="Haft D.H."/>
            <person name="Hickey E.K."/>
            <person name="Kolonay J.F."/>
            <person name="Nelson W.C."/>
            <person name="Umayam L.A."/>
            <person name="Ermolaeva M.D."/>
            <person name="Salzberg S.L."/>
            <person name="Delcher A."/>
            <person name="Utterback T.R."/>
            <person name="Weidman J.F."/>
            <person name="Khouri H.M."/>
            <person name="Gill J."/>
            <person name="Mikula A."/>
            <person name="Bishai W."/>
            <person name="Jacobs W.R. Jr."/>
            <person name="Venter J.C."/>
            <person name="Fraser C.M."/>
        </authorList>
    </citation>
    <scope>NUCLEOTIDE SEQUENCE [LARGE SCALE GENOMIC DNA]</scope>
    <source>
        <strain>CDC 1551 / Oshkosh</strain>
    </source>
</reference>
<proteinExistence type="inferred from homology"/>
<gene>
    <name evidence="2" type="primary">groES</name>
    <name type="synonym">cpn10</name>
    <name evidence="2" type="synonym">groS</name>
    <name type="synonym">mopB</name>
    <name type="ordered locus">MT3527</name>
</gene>
<evidence type="ECO:0000250" key="1"/>
<evidence type="ECO:0000255" key="2">
    <source>
        <dbReference type="HAMAP-Rule" id="MF_00580"/>
    </source>
</evidence>
<evidence type="ECO:0000305" key="3"/>
<keyword id="KW-0143">Chaperone</keyword>
<keyword id="KW-0963">Cytoplasm</keyword>
<keyword id="KW-1185">Reference proteome</keyword>
<keyword id="KW-0346">Stress response</keyword>
<accession>P9WPE4</accession>
<accession>L0TFJ8</accession>
<accession>P09621</accession>
<sequence>MAKVNIKPLEDKILVQANEAETTTASGLVIPDTAKEKPQEGTVVAVGPGRWDEDGEKRIPLDVAEGDTVIYSKYGGTEIKYNGEEYLILSARDVLAVVSK</sequence>
<organism>
    <name type="scientific">Mycobacterium tuberculosis (strain CDC 1551 / Oshkosh)</name>
    <dbReference type="NCBI Taxonomy" id="83331"/>
    <lineage>
        <taxon>Bacteria</taxon>
        <taxon>Bacillati</taxon>
        <taxon>Actinomycetota</taxon>
        <taxon>Actinomycetes</taxon>
        <taxon>Mycobacteriales</taxon>
        <taxon>Mycobacteriaceae</taxon>
        <taxon>Mycobacterium</taxon>
        <taxon>Mycobacterium tuberculosis complex</taxon>
    </lineage>
</organism>
<dbReference type="EMBL" id="AE000516">
    <property type="protein sequence ID" value="AAK47865.1"/>
    <property type="molecule type" value="Genomic_DNA"/>
</dbReference>
<dbReference type="PIR" id="S01381">
    <property type="entry name" value="BVMYBA"/>
</dbReference>
<dbReference type="RefSeq" id="WP_003418028.1">
    <property type="nucleotide sequence ID" value="NZ_KK341227.1"/>
</dbReference>
<dbReference type="SMR" id="P9WPE4"/>
<dbReference type="GeneID" id="66599586"/>
<dbReference type="KEGG" id="mtc:MT3527"/>
<dbReference type="PATRIC" id="fig|83331.31.peg.3784"/>
<dbReference type="HOGENOM" id="CLU_132825_2_0_11"/>
<dbReference type="Proteomes" id="UP000001020">
    <property type="component" value="Chromosome"/>
</dbReference>
<dbReference type="GO" id="GO:0005737">
    <property type="term" value="C:cytoplasm"/>
    <property type="evidence" value="ECO:0007669"/>
    <property type="project" value="UniProtKB-SubCell"/>
</dbReference>
<dbReference type="GO" id="GO:0005524">
    <property type="term" value="F:ATP binding"/>
    <property type="evidence" value="ECO:0007669"/>
    <property type="project" value="InterPro"/>
</dbReference>
<dbReference type="GO" id="GO:0046872">
    <property type="term" value="F:metal ion binding"/>
    <property type="evidence" value="ECO:0007669"/>
    <property type="project" value="TreeGrafter"/>
</dbReference>
<dbReference type="GO" id="GO:0044183">
    <property type="term" value="F:protein folding chaperone"/>
    <property type="evidence" value="ECO:0007669"/>
    <property type="project" value="InterPro"/>
</dbReference>
<dbReference type="GO" id="GO:0051087">
    <property type="term" value="F:protein-folding chaperone binding"/>
    <property type="evidence" value="ECO:0007669"/>
    <property type="project" value="TreeGrafter"/>
</dbReference>
<dbReference type="GO" id="GO:0051082">
    <property type="term" value="F:unfolded protein binding"/>
    <property type="evidence" value="ECO:0007669"/>
    <property type="project" value="TreeGrafter"/>
</dbReference>
<dbReference type="GO" id="GO:0051085">
    <property type="term" value="P:chaperone cofactor-dependent protein refolding"/>
    <property type="evidence" value="ECO:0007669"/>
    <property type="project" value="TreeGrafter"/>
</dbReference>
<dbReference type="CDD" id="cd00320">
    <property type="entry name" value="cpn10"/>
    <property type="match status" value="1"/>
</dbReference>
<dbReference type="FunFam" id="2.30.33.40:FF:000001">
    <property type="entry name" value="10 kDa chaperonin"/>
    <property type="match status" value="1"/>
</dbReference>
<dbReference type="Gene3D" id="2.30.33.40">
    <property type="entry name" value="GroES chaperonin"/>
    <property type="match status" value="1"/>
</dbReference>
<dbReference type="HAMAP" id="MF_00580">
    <property type="entry name" value="CH10"/>
    <property type="match status" value="1"/>
</dbReference>
<dbReference type="InterPro" id="IPR020818">
    <property type="entry name" value="Chaperonin_GroES"/>
</dbReference>
<dbReference type="InterPro" id="IPR037124">
    <property type="entry name" value="Chaperonin_GroES_sf"/>
</dbReference>
<dbReference type="InterPro" id="IPR018369">
    <property type="entry name" value="Chaprnonin_Cpn10_CS"/>
</dbReference>
<dbReference type="InterPro" id="IPR011032">
    <property type="entry name" value="GroES-like_sf"/>
</dbReference>
<dbReference type="NCBIfam" id="NF001530">
    <property type="entry name" value="PRK00364.1-6"/>
    <property type="match status" value="1"/>
</dbReference>
<dbReference type="NCBIfam" id="NF001531">
    <property type="entry name" value="PRK00364.2-2"/>
    <property type="match status" value="1"/>
</dbReference>
<dbReference type="NCBIfam" id="NF001533">
    <property type="entry name" value="PRK00364.2-4"/>
    <property type="match status" value="1"/>
</dbReference>
<dbReference type="NCBIfam" id="NF001534">
    <property type="entry name" value="PRK00364.2-5"/>
    <property type="match status" value="1"/>
</dbReference>
<dbReference type="PANTHER" id="PTHR10772">
    <property type="entry name" value="10 KDA HEAT SHOCK PROTEIN"/>
    <property type="match status" value="1"/>
</dbReference>
<dbReference type="PANTHER" id="PTHR10772:SF58">
    <property type="entry name" value="CO-CHAPERONIN GROES"/>
    <property type="match status" value="1"/>
</dbReference>
<dbReference type="Pfam" id="PF00166">
    <property type="entry name" value="Cpn10"/>
    <property type="match status" value="1"/>
</dbReference>
<dbReference type="PRINTS" id="PR00297">
    <property type="entry name" value="CHAPERONIN10"/>
</dbReference>
<dbReference type="SMART" id="SM00883">
    <property type="entry name" value="Cpn10"/>
    <property type="match status" value="1"/>
</dbReference>
<dbReference type="SUPFAM" id="SSF50129">
    <property type="entry name" value="GroES-like"/>
    <property type="match status" value="1"/>
</dbReference>
<dbReference type="PROSITE" id="PS00681">
    <property type="entry name" value="CHAPERONINS_CPN10"/>
    <property type="match status" value="1"/>
</dbReference>
<name>CH10_MYCTO</name>